<name>MINE_MARN8</name>
<accession>A1U344</accession>
<evidence type="ECO:0000255" key="1">
    <source>
        <dbReference type="HAMAP-Rule" id="MF_00262"/>
    </source>
</evidence>
<protein>
    <recommendedName>
        <fullName evidence="1">Cell division topological specificity factor</fullName>
    </recommendedName>
</protein>
<proteinExistence type="inferred from homology"/>
<reference key="1">
    <citation type="journal article" date="2011" name="Appl. Environ. Microbiol.">
        <title>Genomic potential of Marinobacter aquaeolei, a biogeochemical 'opportunitroph'.</title>
        <authorList>
            <person name="Singer E."/>
            <person name="Webb E.A."/>
            <person name="Nelson W.C."/>
            <person name="Heidelberg J.F."/>
            <person name="Ivanova N."/>
            <person name="Pati A."/>
            <person name="Edwards K.J."/>
        </authorList>
    </citation>
    <scope>NUCLEOTIDE SEQUENCE [LARGE SCALE GENOMIC DNA]</scope>
    <source>
        <strain>ATCC 700491 / DSM 11845 / VT8</strain>
    </source>
</reference>
<gene>
    <name evidence="1" type="primary">minE</name>
    <name type="ordered locus">Maqu_2337</name>
</gene>
<organism>
    <name type="scientific">Marinobacter nauticus (strain ATCC 700491 / DSM 11845 / VT8)</name>
    <name type="common">Marinobacter aquaeolei</name>
    <dbReference type="NCBI Taxonomy" id="351348"/>
    <lineage>
        <taxon>Bacteria</taxon>
        <taxon>Pseudomonadati</taxon>
        <taxon>Pseudomonadota</taxon>
        <taxon>Gammaproteobacteria</taxon>
        <taxon>Pseudomonadales</taxon>
        <taxon>Marinobacteraceae</taxon>
        <taxon>Marinobacter</taxon>
    </lineage>
</organism>
<keyword id="KW-0131">Cell cycle</keyword>
<keyword id="KW-0132">Cell division</keyword>
<comment type="function">
    <text evidence="1">Prevents the cell division inhibition by proteins MinC and MinD at internal division sites while permitting inhibition at polar sites. This ensures cell division at the proper site by restricting the formation of a division septum at the midpoint of the long axis of the cell.</text>
</comment>
<comment type="similarity">
    <text evidence="1">Belongs to the MinE family.</text>
</comment>
<feature type="chain" id="PRO_0000298132" description="Cell division topological specificity factor">
    <location>
        <begin position="1"/>
        <end position="83"/>
    </location>
</feature>
<dbReference type="EMBL" id="CP000514">
    <property type="protein sequence ID" value="ABM19413.1"/>
    <property type="molecule type" value="Genomic_DNA"/>
</dbReference>
<dbReference type="RefSeq" id="WP_011785800.1">
    <property type="nucleotide sequence ID" value="NC_008740.1"/>
</dbReference>
<dbReference type="SMR" id="A1U344"/>
<dbReference type="STRING" id="351348.Maqu_2337"/>
<dbReference type="GeneID" id="31820407"/>
<dbReference type="KEGG" id="maq:Maqu_2337"/>
<dbReference type="eggNOG" id="COG0851">
    <property type="taxonomic scope" value="Bacteria"/>
</dbReference>
<dbReference type="HOGENOM" id="CLU_137929_2_1_6"/>
<dbReference type="OrthoDB" id="9802655at2"/>
<dbReference type="Proteomes" id="UP000000998">
    <property type="component" value="Chromosome"/>
</dbReference>
<dbReference type="GO" id="GO:0051301">
    <property type="term" value="P:cell division"/>
    <property type="evidence" value="ECO:0007669"/>
    <property type="project" value="UniProtKB-KW"/>
</dbReference>
<dbReference type="GO" id="GO:0032955">
    <property type="term" value="P:regulation of division septum assembly"/>
    <property type="evidence" value="ECO:0007669"/>
    <property type="project" value="InterPro"/>
</dbReference>
<dbReference type="FunFam" id="3.30.1070.10:FF:000001">
    <property type="entry name" value="Cell division topological specificity factor"/>
    <property type="match status" value="1"/>
</dbReference>
<dbReference type="Gene3D" id="3.30.1070.10">
    <property type="entry name" value="Cell division topological specificity factor MinE"/>
    <property type="match status" value="1"/>
</dbReference>
<dbReference type="HAMAP" id="MF_00262">
    <property type="entry name" value="MinE"/>
    <property type="match status" value="1"/>
</dbReference>
<dbReference type="InterPro" id="IPR005527">
    <property type="entry name" value="MinE"/>
</dbReference>
<dbReference type="InterPro" id="IPR036707">
    <property type="entry name" value="MinE_sf"/>
</dbReference>
<dbReference type="NCBIfam" id="TIGR01215">
    <property type="entry name" value="minE"/>
    <property type="match status" value="1"/>
</dbReference>
<dbReference type="NCBIfam" id="NF001422">
    <property type="entry name" value="PRK00296.1"/>
    <property type="match status" value="1"/>
</dbReference>
<dbReference type="NCBIfam" id="NF010595">
    <property type="entry name" value="PRK13989.1"/>
    <property type="match status" value="1"/>
</dbReference>
<dbReference type="Pfam" id="PF03776">
    <property type="entry name" value="MinE"/>
    <property type="match status" value="1"/>
</dbReference>
<dbReference type="SUPFAM" id="SSF55229">
    <property type="entry name" value="Cell division protein MinE topological specificity domain"/>
    <property type="match status" value="1"/>
</dbReference>
<sequence length="83" mass="9793">MSFFDYFRSKKNSTASVAKERLQIIVAHERGQREQPDYLPQLQQELLQVIRKYVQISDDMVQVEVDRNDHCSVLELNVTLPEK</sequence>